<keyword id="KW-1185">Reference proteome</keyword>
<keyword id="KW-0687">Ribonucleoprotein</keyword>
<keyword id="KW-0689">Ribosomal protein</keyword>
<keyword id="KW-0694">RNA-binding</keyword>
<keyword id="KW-0699">rRNA-binding</keyword>
<protein>
    <recommendedName>
        <fullName evidence="1">Large ribosomal subunit protein uL6</fullName>
    </recommendedName>
    <alternativeName>
        <fullName evidence="2">50S ribosomal protein L6</fullName>
    </alternativeName>
</protein>
<gene>
    <name evidence="1" type="primary">rplF</name>
    <name type="ordered locus">Dred_0230</name>
</gene>
<reference key="1">
    <citation type="submission" date="2007-03" db="EMBL/GenBank/DDBJ databases">
        <title>Complete sequence of Desulfotomaculum reducens MI-1.</title>
        <authorList>
            <consortium name="US DOE Joint Genome Institute"/>
            <person name="Copeland A."/>
            <person name="Lucas S."/>
            <person name="Lapidus A."/>
            <person name="Barry K."/>
            <person name="Detter J.C."/>
            <person name="Glavina del Rio T."/>
            <person name="Hammon N."/>
            <person name="Israni S."/>
            <person name="Dalin E."/>
            <person name="Tice H."/>
            <person name="Pitluck S."/>
            <person name="Sims D."/>
            <person name="Brettin T."/>
            <person name="Bruce D."/>
            <person name="Han C."/>
            <person name="Tapia R."/>
            <person name="Schmutz J."/>
            <person name="Larimer F."/>
            <person name="Land M."/>
            <person name="Hauser L."/>
            <person name="Kyrpides N."/>
            <person name="Kim E."/>
            <person name="Tebo B.M."/>
            <person name="Richardson P."/>
        </authorList>
    </citation>
    <scope>NUCLEOTIDE SEQUENCE [LARGE SCALE GENOMIC DNA]</scope>
    <source>
        <strain>ATCC BAA-1160 / DSM 100696 / MI-1</strain>
    </source>
</reference>
<proteinExistence type="inferred from homology"/>
<name>RL6_DESRM</name>
<accession>A4J126</accession>
<organism>
    <name type="scientific">Desulforamulus reducens (strain ATCC BAA-1160 / DSM 100696 / MI-1)</name>
    <name type="common">Desulfotomaculum reducens</name>
    <dbReference type="NCBI Taxonomy" id="349161"/>
    <lineage>
        <taxon>Bacteria</taxon>
        <taxon>Bacillati</taxon>
        <taxon>Bacillota</taxon>
        <taxon>Clostridia</taxon>
        <taxon>Eubacteriales</taxon>
        <taxon>Peptococcaceae</taxon>
        <taxon>Desulforamulus</taxon>
    </lineage>
</organism>
<sequence>MSRIGKKPIPVPQGVDVKINGNVISVKGPKGQLEQEFHQDMNIKLEEGNLVVERPSDAKDHRALHGLTRTLLNNMVEGVTNGFQRNLELVGVGYRAAKQGNKLVLTIGYSHPVEIEPPAGIEIEVPAATKIAIKGSDKQAVGQLAANIRAVREPEPYKGKGIKYENEIIRRKAGKAGGKGKK</sequence>
<comment type="function">
    <text evidence="1">This protein binds to the 23S rRNA, and is important in its secondary structure. It is located near the subunit interface in the base of the L7/L12 stalk, and near the tRNA binding site of the peptidyltransferase center.</text>
</comment>
<comment type="subunit">
    <text evidence="1">Part of the 50S ribosomal subunit.</text>
</comment>
<comment type="similarity">
    <text evidence="1">Belongs to the universal ribosomal protein uL6 family.</text>
</comment>
<evidence type="ECO:0000255" key="1">
    <source>
        <dbReference type="HAMAP-Rule" id="MF_01365"/>
    </source>
</evidence>
<evidence type="ECO:0000305" key="2"/>
<dbReference type="EMBL" id="CP000612">
    <property type="protein sequence ID" value="ABO48779.1"/>
    <property type="molecule type" value="Genomic_DNA"/>
</dbReference>
<dbReference type="RefSeq" id="WP_011876619.1">
    <property type="nucleotide sequence ID" value="NC_009253.1"/>
</dbReference>
<dbReference type="SMR" id="A4J126"/>
<dbReference type="STRING" id="349161.Dred_0230"/>
<dbReference type="KEGG" id="drm:Dred_0230"/>
<dbReference type="eggNOG" id="COG0097">
    <property type="taxonomic scope" value="Bacteria"/>
</dbReference>
<dbReference type="HOGENOM" id="CLU_065464_1_2_9"/>
<dbReference type="OrthoDB" id="9805007at2"/>
<dbReference type="Proteomes" id="UP000001556">
    <property type="component" value="Chromosome"/>
</dbReference>
<dbReference type="GO" id="GO:0022625">
    <property type="term" value="C:cytosolic large ribosomal subunit"/>
    <property type="evidence" value="ECO:0007669"/>
    <property type="project" value="TreeGrafter"/>
</dbReference>
<dbReference type="GO" id="GO:0019843">
    <property type="term" value="F:rRNA binding"/>
    <property type="evidence" value="ECO:0007669"/>
    <property type="project" value="UniProtKB-UniRule"/>
</dbReference>
<dbReference type="GO" id="GO:0003735">
    <property type="term" value="F:structural constituent of ribosome"/>
    <property type="evidence" value="ECO:0007669"/>
    <property type="project" value="InterPro"/>
</dbReference>
<dbReference type="GO" id="GO:0002181">
    <property type="term" value="P:cytoplasmic translation"/>
    <property type="evidence" value="ECO:0007669"/>
    <property type="project" value="TreeGrafter"/>
</dbReference>
<dbReference type="FunFam" id="3.90.930.12:FF:000001">
    <property type="entry name" value="50S ribosomal protein L6"/>
    <property type="match status" value="1"/>
</dbReference>
<dbReference type="FunFam" id="3.90.930.12:FF:000002">
    <property type="entry name" value="50S ribosomal protein L6"/>
    <property type="match status" value="1"/>
</dbReference>
<dbReference type="Gene3D" id="3.90.930.12">
    <property type="entry name" value="Ribosomal protein L6, alpha-beta domain"/>
    <property type="match status" value="2"/>
</dbReference>
<dbReference type="HAMAP" id="MF_01365_B">
    <property type="entry name" value="Ribosomal_uL6_B"/>
    <property type="match status" value="1"/>
</dbReference>
<dbReference type="InterPro" id="IPR000702">
    <property type="entry name" value="Ribosomal_uL6-like"/>
</dbReference>
<dbReference type="InterPro" id="IPR036789">
    <property type="entry name" value="Ribosomal_uL6-like_a/b-dom_sf"/>
</dbReference>
<dbReference type="InterPro" id="IPR020040">
    <property type="entry name" value="Ribosomal_uL6_a/b-dom"/>
</dbReference>
<dbReference type="InterPro" id="IPR019906">
    <property type="entry name" value="Ribosomal_uL6_bac-type"/>
</dbReference>
<dbReference type="InterPro" id="IPR002358">
    <property type="entry name" value="Ribosomal_uL6_CS"/>
</dbReference>
<dbReference type="NCBIfam" id="TIGR03654">
    <property type="entry name" value="L6_bact"/>
    <property type="match status" value="1"/>
</dbReference>
<dbReference type="PANTHER" id="PTHR11655">
    <property type="entry name" value="60S/50S RIBOSOMAL PROTEIN L6/L9"/>
    <property type="match status" value="1"/>
</dbReference>
<dbReference type="PANTHER" id="PTHR11655:SF14">
    <property type="entry name" value="LARGE RIBOSOMAL SUBUNIT PROTEIN UL6M"/>
    <property type="match status" value="1"/>
</dbReference>
<dbReference type="Pfam" id="PF00347">
    <property type="entry name" value="Ribosomal_L6"/>
    <property type="match status" value="2"/>
</dbReference>
<dbReference type="PIRSF" id="PIRSF002162">
    <property type="entry name" value="Ribosomal_L6"/>
    <property type="match status" value="1"/>
</dbReference>
<dbReference type="PRINTS" id="PR00059">
    <property type="entry name" value="RIBOSOMALL6"/>
</dbReference>
<dbReference type="SUPFAM" id="SSF56053">
    <property type="entry name" value="Ribosomal protein L6"/>
    <property type="match status" value="2"/>
</dbReference>
<dbReference type="PROSITE" id="PS00525">
    <property type="entry name" value="RIBOSOMAL_L6_1"/>
    <property type="match status" value="1"/>
</dbReference>
<feature type="chain" id="PRO_1000073402" description="Large ribosomal subunit protein uL6">
    <location>
        <begin position="1"/>
        <end position="182"/>
    </location>
</feature>